<accession>Q59111</accession>
<accession>D2RM71</accession>
<organism>
    <name type="scientific">Acidaminococcus fermentans (strain ATCC 25085 / DSM 20731 / CCUG 9996 / CIP 106432 / VR4)</name>
    <dbReference type="NCBI Taxonomy" id="591001"/>
    <lineage>
        <taxon>Bacteria</taxon>
        <taxon>Bacillati</taxon>
        <taxon>Bacillota</taxon>
        <taxon>Negativicutes</taxon>
        <taxon>Acidaminococcales</taxon>
        <taxon>Acidaminococcaceae</taxon>
        <taxon>Acidaminococcus</taxon>
    </lineage>
</organism>
<evidence type="ECO:0000269" key="1">
    <source>
    </source>
</evidence>
<evidence type="ECO:0000305" key="2"/>
<evidence type="ECO:0007829" key="3">
    <source>
        <dbReference type="PDB" id="1POI"/>
    </source>
</evidence>
<keyword id="KW-0002">3D-structure</keyword>
<keyword id="KW-0963">Cytoplasm</keyword>
<keyword id="KW-0903">Direct protein sequencing</keyword>
<keyword id="KW-1185">Reference proteome</keyword>
<keyword id="KW-0808">Transferase</keyword>
<reference key="1">
    <citation type="journal article" date="1994" name="Eur. J. Biochem.">
        <title>Location of the two genes encoding glutaconate coenzyme A-transferase at the beginning of the hydroxyglutarate operon in Acidaminococcus fermentans.</title>
        <authorList>
            <person name="Mack M."/>
            <person name="Bendrat K."/>
            <person name="Zelder O."/>
            <person name="Eckel E."/>
            <person name="Linder D."/>
            <person name="Buckel W."/>
        </authorList>
    </citation>
    <scope>NUCLEOTIDE SEQUENCE [GENOMIC DNA]</scope>
    <scope>PROTEIN SEQUENCE OF 2-13</scope>
</reference>
<reference key="2">
    <citation type="journal article" date="2010" name="Stand. Genomic Sci.">
        <title>Complete genome sequence of Acidaminococcus fermentans type strain (VR4).</title>
        <authorList>
            <person name="Chang Y.J."/>
            <person name="Pukall R."/>
            <person name="Saunders E."/>
            <person name="Lapidus A."/>
            <person name="Copeland A."/>
            <person name="Nolan M."/>
            <person name="Glavina Del Rio T."/>
            <person name="Lucas S."/>
            <person name="Chen F."/>
            <person name="Tice H."/>
            <person name="Cheng J.F."/>
            <person name="Han C."/>
            <person name="Detter J.C."/>
            <person name="Bruce D."/>
            <person name="Goodwin L."/>
            <person name="Pitluck S."/>
            <person name="Mikhailova N."/>
            <person name="Liolios K."/>
            <person name="Pati A."/>
            <person name="Ivanova N."/>
            <person name="Mavromatis K."/>
            <person name="Chen A."/>
            <person name="Palaniappan K."/>
            <person name="Land M."/>
            <person name="Hauser L."/>
            <person name="Jeffries C.D."/>
            <person name="Brettin T."/>
            <person name="Rohde M."/>
            <person name="Goker M."/>
            <person name="Bristow J."/>
            <person name="Eisen J.A."/>
            <person name="Markowitz V."/>
            <person name="Hugenholtz P."/>
            <person name="Kyrpides N.C."/>
            <person name="Klenk H.P."/>
        </authorList>
    </citation>
    <scope>NUCLEOTIDE SEQUENCE [LARGE SCALE GENOMIC DNA]</scope>
    <source>
        <strain>ATCC 25085 / DSM 20731 / CCUG 9996 / CIP 106432 / VR4</strain>
    </source>
</reference>
<reference key="3">
    <citation type="journal article" date="1997" name="Structure">
        <title>Glutaconate CoA-transferase from Acidaminococcus fermentans: the crystal structure reveals homology with other CoA-transferases.</title>
        <authorList>
            <person name="Jacob U."/>
            <person name="Mack M."/>
            <person name="Clausen T."/>
            <person name="Huber R."/>
            <person name="Buckel W."/>
            <person name="Messerschmidt A."/>
        </authorList>
    </citation>
    <scope>X-RAY CRYSTALLOGRAPHY (2.55 ANGSTROMS)</scope>
</reference>
<feature type="initiator methionine" description="Removed" evidence="1">
    <location>
        <position position="1"/>
    </location>
</feature>
<feature type="chain" id="PRO_0000157927" description="Glutaconate CoA-transferase subunit A">
    <location>
        <begin position="2"/>
        <end position="320"/>
    </location>
</feature>
<feature type="helix" evidence="3">
    <location>
        <begin position="7"/>
        <end position="14"/>
    </location>
</feature>
<feature type="strand" evidence="3">
    <location>
        <begin position="20"/>
        <end position="23"/>
    </location>
</feature>
<feature type="helix" evidence="3">
    <location>
        <begin position="33"/>
        <end position="41"/>
    </location>
</feature>
<feature type="strand" evidence="3">
    <location>
        <begin position="47"/>
        <end position="50"/>
    </location>
</feature>
<feature type="strand" evidence="3">
    <location>
        <begin position="52"/>
        <end position="54"/>
    </location>
</feature>
<feature type="helix" evidence="3">
    <location>
        <begin position="56"/>
        <end position="63"/>
    </location>
</feature>
<feature type="strand" evidence="3">
    <location>
        <begin position="67"/>
        <end position="75"/>
    </location>
</feature>
<feature type="turn" evidence="3">
    <location>
        <begin position="78"/>
        <end position="80"/>
    </location>
</feature>
<feature type="strand" evidence="3">
    <location>
        <begin position="81"/>
        <end position="83"/>
    </location>
</feature>
<feature type="helix" evidence="3">
    <location>
        <begin position="85"/>
        <end position="93"/>
    </location>
</feature>
<feature type="strand" evidence="3">
    <location>
        <begin position="96"/>
        <end position="100"/>
    </location>
</feature>
<feature type="helix" evidence="3">
    <location>
        <begin position="103"/>
        <end position="115"/>
    </location>
</feature>
<feature type="strand" evidence="3">
    <location>
        <begin position="118"/>
        <end position="123"/>
    </location>
</feature>
<feature type="helix" evidence="3">
    <location>
        <begin position="129"/>
        <end position="132"/>
    </location>
</feature>
<feature type="helix" evidence="3">
    <location>
        <begin position="138"/>
        <end position="142"/>
    </location>
</feature>
<feature type="strand" evidence="3">
    <location>
        <begin position="153"/>
        <end position="157"/>
    </location>
</feature>
<feature type="strand" evidence="3">
    <location>
        <begin position="160"/>
        <end position="169"/>
    </location>
</feature>
<feature type="strand" evidence="3">
    <location>
        <begin position="174"/>
        <end position="183"/>
    </location>
</feature>
<feature type="helix" evidence="3">
    <location>
        <begin position="198"/>
        <end position="204"/>
    </location>
</feature>
<feature type="strand" evidence="3">
    <location>
        <begin position="205"/>
        <end position="215"/>
    </location>
</feature>
<feature type="helix" evidence="3">
    <location>
        <begin position="218"/>
        <end position="222"/>
    </location>
</feature>
<feature type="helix" evidence="3">
    <location>
        <begin position="225"/>
        <end position="227"/>
    </location>
</feature>
<feature type="helix" evidence="3">
    <location>
        <begin position="232"/>
        <end position="234"/>
    </location>
</feature>
<feature type="strand" evidence="3">
    <location>
        <begin position="237"/>
        <end position="240"/>
    </location>
</feature>
<feature type="turn" evidence="3">
    <location>
        <begin position="242"/>
        <end position="247"/>
    </location>
</feature>
<feature type="strand" evidence="3">
    <location>
        <begin position="248"/>
        <end position="250"/>
    </location>
</feature>
<feature type="turn" evidence="3">
    <location>
        <begin position="251"/>
        <end position="253"/>
    </location>
</feature>
<feature type="helix" evidence="3">
    <location>
        <begin position="258"/>
        <end position="267"/>
    </location>
</feature>
<feature type="helix" evidence="3">
    <location>
        <begin position="271"/>
        <end position="281"/>
    </location>
</feature>
<feature type="turn" evidence="3">
    <location>
        <begin position="282"/>
        <end position="284"/>
    </location>
</feature>
<feature type="helix" evidence="3">
    <location>
        <begin position="288"/>
        <end position="295"/>
    </location>
</feature>
<feature type="helix" evidence="3">
    <location>
        <begin position="297"/>
        <end position="301"/>
    </location>
</feature>
<feature type="turn" evidence="3">
    <location>
        <begin position="307"/>
        <end position="309"/>
    </location>
</feature>
<feature type="helix" evidence="3">
    <location>
        <begin position="315"/>
        <end position="317"/>
    </location>
</feature>
<gene>
    <name type="primary">gctA</name>
    <name type="ordered locus">Acfer_1819</name>
</gene>
<name>GCTA_ACIFV</name>
<proteinExistence type="evidence at protein level"/>
<protein>
    <recommendedName>
        <fullName>Glutaconate CoA-transferase subunit A</fullName>
        <ecNumber>2.8.3.12</ecNumber>
    </recommendedName>
    <alternativeName>
        <fullName>GCT large subunit</fullName>
    </alternativeName>
</protein>
<comment type="function">
    <text>Catalyzes the transfer of the CoA moiety from acetyl-CoA to (R)-2-hydroxyglutarate and related compounds like glutaconate.</text>
</comment>
<comment type="catalytic activity">
    <reaction>
        <text>trans-glutaconate + acetyl-CoA = (2E)-glutaconyl-CoA + acetate</text>
        <dbReference type="Rhea" id="RHEA:23208"/>
        <dbReference type="ChEBI" id="CHEBI:30089"/>
        <dbReference type="ChEBI" id="CHEBI:36460"/>
        <dbReference type="ChEBI" id="CHEBI:57288"/>
        <dbReference type="ChEBI" id="CHEBI:57353"/>
        <dbReference type="EC" id="2.8.3.12"/>
    </reaction>
</comment>
<comment type="pathway">
    <text>Amino-acid degradation; L-glutamate degradation via hydroxyglutarate pathway; crotonoyl-CoA from L-glutamate: step 3/5.</text>
</comment>
<comment type="subunit">
    <text>Heterooctamer of four A and four B subunits.</text>
</comment>
<comment type="subcellular location">
    <subcellularLocation>
        <location>Cytoplasm</location>
    </subcellularLocation>
</comment>
<comment type="similarity">
    <text evidence="2">Belongs to the 3-oxoacid CoA-transferase subunit A family.</text>
</comment>
<sequence>MSKVMTLKDAIAKYVHSGDHIALGGFTTDRKPYAAVFEILRQGITDLTGLGGAAGGDWDMLIGNGRVKAYINCYTANSGVTNVSRRFRKWFEAGKLTMEDYSQDVIYMMWHAAALGLPFLPVTLMQGSGLTDEWGISKEVRKTLDKVPDDKFKYIDNPFKPGEKVVAVPVPQVDVAIIHAQQASPDGTVRIWGGKFQDVDIAEAAKYTIVTCEEIISDEEIRRDPTKNDIPGMCVDAVVLAPYGAHPSQCYGLYDYDNPFLKVYDKVSKTQEDFDAFCKEWVFDLKDHDEYLNKLGATRLINLKVVPGLGYHIDMTKEDK</sequence>
<dbReference type="EC" id="2.8.3.12"/>
<dbReference type="EMBL" id="X81440">
    <property type="protein sequence ID" value="CAA57199.1"/>
    <property type="molecule type" value="Genomic_DNA"/>
</dbReference>
<dbReference type="EMBL" id="CP001859">
    <property type="protein sequence ID" value="ADB48173.1"/>
    <property type="molecule type" value="Genomic_DNA"/>
</dbReference>
<dbReference type="PIR" id="S51051">
    <property type="entry name" value="S51051"/>
</dbReference>
<dbReference type="RefSeq" id="WP_012939156.1">
    <property type="nucleotide sequence ID" value="NC_013740.1"/>
</dbReference>
<dbReference type="PDB" id="1POI">
    <property type="method" value="X-ray"/>
    <property type="resolution" value="2.50 A"/>
    <property type="chains" value="A/C=2-318"/>
</dbReference>
<dbReference type="PDBsum" id="1POI"/>
<dbReference type="SMR" id="Q59111"/>
<dbReference type="DIP" id="DIP-6200N"/>
<dbReference type="IntAct" id="Q59111">
    <property type="interactions" value="1"/>
</dbReference>
<dbReference type="STRING" id="591001.Acfer_1819"/>
<dbReference type="GeneID" id="78335515"/>
<dbReference type="KEGG" id="afn:Acfer_1819"/>
<dbReference type="eggNOG" id="COG1788">
    <property type="taxonomic scope" value="Bacteria"/>
</dbReference>
<dbReference type="HOGENOM" id="CLU_049557_0_0_9"/>
<dbReference type="OrthoDB" id="9777193at2"/>
<dbReference type="BioCyc" id="MetaCyc:MONOMER-1028"/>
<dbReference type="BRENDA" id="2.8.3.12">
    <property type="organism ID" value="85"/>
</dbReference>
<dbReference type="SABIO-RK" id="Q59111"/>
<dbReference type="UniPathway" id="UPA00533">
    <property type="reaction ID" value="UER00686"/>
</dbReference>
<dbReference type="EvolutionaryTrace" id="Q59111"/>
<dbReference type="Proteomes" id="UP000001902">
    <property type="component" value="Chromosome"/>
</dbReference>
<dbReference type="GO" id="GO:0005737">
    <property type="term" value="C:cytoplasm"/>
    <property type="evidence" value="ECO:0007669"/>
    <property type="project" value="UniProtKB-SubCell"/>
</dbReference>
<dbReference type="GO" id="GO:0018730">
    <property type="term" value="F:glutaconate CoA-transferase activity"/>
    <property type="evidence" value="ECO:0007669"/>
    <property type="project" value="UniProtKB-EC"/>
</dbReference>
<dbReference type="GO" id="GO:0019552">
    <property type="term" value="P:glutamate catabolic process via 2-hydroxyglutarate"/>
    <property type="evidence" value="ECO:0007669"/>
    <property type="project" value="UniProtKB-UniPathway"/>
</dbReference>
<dbReference type="Gene3D" id="3.30.30.40">
    <property type="match status" value="1"/>
</dbReference>
<dbReference type="Gene3D" id="3.40.1080.10">
    <property type="entry name" value="Glutaconate Coenzyme A-transferase"/>
    <property type="match status" value="1"/>
</dbReference>
<dbReference type="InterPro" id="IPR004165">
    <property type="entry name" value="CoA_trans_fam_I"/>
</dbReference>
<dbReference type="InterPro" id="IPR037171">
    <property type="entry name" value="NagB/RpiA_transferase-like"/>
</dbReference>
<dbReference type="Pfam" id="PF01144">
    <property type="entry name" value="CoA_trans"/>
    <property type="match status" value="1"/>
</dbReference>
<dbReference type="SMART" id="SM00882">
    <property type="entry name" value="CoA_trans"/>
    <property type="match status" value="1"/>
</dbReference>
<dbReference type="SUPFAM" id="SSF100950">
    <property type="entry name" value="NagB/RpiA/CoA transferase-like"/>
    <property type="match status" value="1"/>
</dbReference>